<proteinExistence type="inferred from homology"/>
<organism>
    <name type="scientific">Rhodopseudomonas palustris (strain HaA2)</name>
    <dbReference type="NCBI Taxonomy" id="316058"/>
    <lineage>
        <taxon>Bacteria</taxon>
        <taxon>Pseudomonadati</taxon>
        <taxon>Pseudomonadota</taxon>
        <taxon>Alphaproteobacteria</taxon>
        <taxon>Hyphomicrobiales</taxon>
        <taxon>Nitrobacteraceae</taxon>
        <taxon>Rhodopseudomonas</taxon>
    </lineage>
</organism>
<reference key="1">
    <citation type="submission" date="2006-01" db="EMBL/GenBank/DDBJ databases">
        <title>Complete sequence of Rhodopseudomonas palustris HaA2.</title>
        <authorList>
            <consortium name="US DOE Joint Genome Institute"/>
            <person name="Copeland A."/>
            <person name="Lucas S."/>
            <person name="Lapidus A."/>
            <person name="Barry K."/>
            <person name="Detter J.C."/>
            <person name="Glavina T."/>
            <person name="Hammon N."/>
            <person name="Israni S."/>
            <person name="Pitluck S."/>
            <person name="Chain P."/>
            <person name="Malfatti S."/>
            <person name="Shin M."/>
            <person name="Vergez L."/>
            <person name="Schmutz J."/>
            <person name="Larimer F."/>
            <person name="Land M."/>
            <person name="Hauser L."/>
            <person name="Pelletier D.A."/>
            <person name="Kyrpides N."/>
            <person name="Anderson I."/>
            <person name="Oda Y."/>
            <person name="Harwood C.S."/>
            <person name="Richardson P."/>
        </authorList>
    </citation>
    <scope>NUCLEOTIDE SEQUENCE [LARGE SCALE GENOMIC DNA]</scope>
    <source>
        <strain>HaA2</strain>
    </source>
</reference>
<dbReference type="EC" id="2.1.1.163" evidence="1"/>
<dbReference type="EC" id="2.1.1.201" evidence="1"/>
<dbReference type="EMBL" id="CP000250">
    <property type="protein sequence ID" value="ABD05331.1"/>
    <property type="molecule type" value="Genomic_DNA"/>
</dbReference>
<dbReference type="RefSeq" id="WP_011439521.1">
    <property type="nucleotide sequence ID" value="NC_007778.1"/>
</dbReference>
<dbReference type="SMR" id="Q2J2H9"/>
<dbReference type="STRING" id="316058.RPB_0620"/>
<dbReference type="KEGG" id="rpb:RPB_0620"/>
<dbReference type="eggNOG" id="COG2226">
    <property type="taxonomic scope" value="Bacteria"/>
</dbReference>
<dbReference type="HOGENOM" id="CLU_037990_0_0_5"/>
<dbReference type="OrthoDB" id="9808140at2"/>
<dbReference type="UniPathway" id="UPA00079">
    <property type="reaction ID" value="UER00169"/>
</dbReference>
<dbReference type="UniPathway" id="UPA00232"/>
<dbReference type="Proteomes" id="UP000008809">
    <property type="component" value="Chromosome"/>
</dbReference>
<dbReference type="GO" id="GO:0008425">
    <property type="term" value="F:2-methoxy-6-polyprenyl-1,4-benzoquinol methyltransferase activity"/>
    <property type="evidence" value="ECO:0007669"/>
    <property type="project" value="UniProtKB-UniRule"/>
</dbReference>
<dbReference type="GO" id="GO:0043770">
    <property type="term" value="F:demethylmenaquinone methyltransferase activity"/>
    <property type="evidence" value="ECO:0007669"/>
    <property type="project" value="UniProtKB-UniRule"/>
</dbReference>
<dbReference type="GO" id="GO:0009060">
    <property type="term" value="P:aerobic respiration"/>
    <property type="evidence" value="ECO:0007669"/>
    <property type="project" value="UniProtKB-UniRule"/>
</dbReference>
<dbReference type="GO" id="GO:0009234">
    <property type="term" value="P:menaquinone biosynthetic process"/>
    <property type="evidence" value="ECO:0007669"/>
    <property type="project" value="UniProtKB-UniRule"/>
</dbReference>
<dbReference type="GO" id="GO:0032259">
    <property type="term" value="P:methylation"/>
    <property type="evidence" value="ECO:0007669"/>
    <property type="project" value="UniProtKB-KW"/>
</dbReference>
<dbReference type="CDD" id="cd02440">
    <property type="entry name" value="AdoMet_MTases"/>
    <property type="match status" value="1"/>
</dbReference>
<dbReference type="Gene3D" id="3.40.50.150">
    <property type="entry name" value="Vaccinia Virus protein VP39"/>
    <property type="match status" value="1"/>
</dbReference>
<dbReference type="HAMAP" id="MF_01813">
    <property type="entry name" value="MenG_UbiE_methyltr"/>
    <property type="match status" value="1"/>
</dbReference>
<dbReference type="InterPro" id="IPR029063">
    <property type="entry name" value="SAM-dependent_MTases_sf"/>
</dbReference>
<dbReference type="InterPro" id="IPR004033">
    <property type="entry name" value="UbiE/COQ5_MeTrFase"/>
</dbReference>
<dbReference type="InterPro" id="IPR023576">
    <property type="entry name" value="UbiE/COQ5_MeTrFase_CS"/>
</dbReference>
<dbReference type="NCBIfam" id="TIGR01934">
    <property type="entry name" value="MenG_MenH_UbiE"/>
    <property type="match status" value="1"/>
</dbReference>
<dbReference type="NCBIfam" id="NF001242">
    <property type="entry name" value="PRK00216.1-3"/>
    <property type="match status" value="1"/>
</dbReference>
<dbReference type="PANTHER" id="PTHR43591:SF24">
    <property type="entry name" value="2-METHOXY-6-POLYPRENYL-1,4-BENZOQUINOL METHYLASE, MITOCHONDRIAL"/>
    <property type="match status" value="1"/>
</dbReference>
<dbReference type="PANTHER" id="PTHR43591">
    <property type="entry name" value="METHYLTRANSFERASE"/>
    <property type="match status" value="1"/>
</dbReference>
<dbReference type="Pfam" id="PF01209">
    <property type="entry name" value="Ubie_methyltran"/>
    <property type="match status" value="1"/>
</dbReference>
<dbReference type="SUPFAM" id="SSF53335">
    <property type="entry name" value="S-adenosyl-L-methionine-dependent methyltransferases"/>
    <property type="match status" value="1"/>
</dbReference>
<dbReference type="PROSITE" id="PS51608">
    <property type="entry name" value="SAM_MT_UBIE"/>
    <property type="match status" value="1"/>
</dbReference>
<dbReference type="PROSITE" id="PS01183">
    <property type="entry name" value="UBIE_1"/>
    <property type="match status" value="1"/>
</dbReference>
<dbReference type="PROSITE" id="PS01184">
    <property type="entry name" value="UBIE_2"/>
    <property type="match status" value="1"/>
</dbReference>
<name>UBIE_RHOP2</name>
<evidence type="ECO:0000255" key="1">
    <source>
        <dbReference type="HAMAP-Rule" id="MF_01813"/>
    </source>
</evidence>
<accession>Q2J2H9</accession>
<feature type="chain" id="PRO_1000056283" description="Ubiquinone/menaquinone biosynthesis C-methyltransferase UbiE">
    <location>
        <begin position="1"/>
        <end position="253"/>
    </location>
</feature>
<feature type="binding site" evidence="1">
    <location>
        <position position="76"/>
    </location>
    <ligand>
        <name>S-adenosyl-L-methionine</name>
        <dbReference type="ChEBI" id="CHEBI:59789"/>
    </ligand>
</feature>
<feature type="binding site" evidence="1">
    <location>
        <position position="97"/>
    </location>
    <ligand>
        <name>S-adenosyl-L-methionine</name>
        <dbReference type="ChEBI" id="CHEBI:59789"/>
    </ligand>
</feature>
<feature type="binding site" evidence="1">
    <location>
        <begin position="125"/>
        <end position="126"/>
    </location>
    <ligand>
        <name>S-adenosyl-L-methionine</name>
        <dbReference type="ChEBI" id="CHEBI:59789"/>
    </ligand>
</feature>
<protein>
    <recommendedName>
        <fullName evidence="1">Ubiquinone/menaquinone biosynthesis C-methyltransferase UbiE</fullName>
        <ecNumber evidence="1">2.1.1.163</ecNumber>
        <ecNumber evidence="1">2.1.1.201</ecNumber>
    </recommendedName>
    <alternativeName>
        <fullName evidence="1">2-methoxy-6-polyprenyl-1,4-benzoquinol methylase</fullName>
    </alternativeName>
    <alternativeName>
        <fullName evidence="1">Demethylmenaquinone methyltransferase</fullName>
    </alternativeName>
</protein>
<sequence length="253" mass="28246">MTEPGQTTHFGYRDVPLQDKQTLVNDVFHSVASRYDLMNDLMSGGMHRLWKDVMITTLNPPRDDQPFRLLDVAGGTGDISFRAAKASGAGFQATVCDINTDMLEVGRQRAVERHLDGQVEFVEGNAEALQFPDKSYDAYTIAFGIRNVPRIDLALKEAHRVLKPGSRFLCLEFSSVDVPGLAKIYDLFSFKVIPQIGRVVTGDAESYQYLVESIRKFPKPADFGEMMREAGFARVNWQVLSGGIVALHSGWRL</sequence>
<gene>
    <name evidence="1" type="primary">ubiE</name>
    <name type="ordered locus">RPB_0620</name>
</gene>
<keyword id="KW-0474">Menaquinone biosynthesis</keyword>
<keyword id="KW-0489">Methyltransferase</keyword>
<keyword id="KW-1185">Reference proteome</keyword>
<keyword id="KW-0949">S-adenosyl-L-methionine</keyword>
<keyword id="KW-0808">Transferase</keyword>
<keyword id="KW-0831">Ubiquinone biosynthesis</keyword>
<comment type="function">
    <text evidence="1">Methyltransferase required for the conversion of demethylmenaquinol (DMKH2) to menaquinol (MKH2) and the conversion of 2-polyprenyl-6-methoxy-1,4-benzoquinol (DDMQH2) to 2-polyprenyl-3-methyl-6-methoxy-1,4-benzoquinol (DMQH2).</text>
</comment>
<comment type="catalytic activity">
    <reaction evidence="1">
        <text>a 2-demethylmenaquinol + S-adenosyl-L-methionine = a menaquinol + S-adenosyl-L-homocysteine + H(+)</text>
        <dbReference type="Rhea" id="RHEA:42640"/>
        <dbReference type="Rhea" id="RHEA-COMP:9539"/>
        <dbReference type="Rhea" id="RHEA-COMP:9563"/>
        <dbReference type="ChEBI" id="CHEBI:15378"/>
        <dbReference type="ChEBI" id="CHEBI:18151"/>
        <dbReference type="ChEBI" id="CHEBI:55437"/>
        <dbReference type="ChEBI" id="CHEBI:57856"/>
        <dbReference type="ChEBI" id="CHEBI:59789"/>
        <dbReference type="EC" id="2.1.1.163"/>
    </reaction>
</comment>
<comment type="catalytic activity">
    <reaction evidence="1">
        <text>a 2-methoxy-6-(all-trans-polyprenyl)benzene-1,4-diol + S-adenosyl-L-methionine = a 5-methoxy-2-methyl-3-(all-trans-polyprenyl)benzene-1,4-diol + S-adenosyl-L-homocysteine + H(+)</text>
        <dbReference type="Rhea" id="RHEA:28286"/>
        <dbReference type="Rhea" id="RHEA-COMP:10858"/>
        <dbReference type="Rhea" id="RHEA-COMP:10859"/>
        <dbReference type="ChEBI" id="CHEBI:15378"/>
        <dbReference type="ChEBI" id="CHEBI:57856"/>
        <dbReference type="ChEBI" id="CHEBI:59789"/>
        <dbReference type="ChEBI" id="CHEBI:84166"/>
        <dbReference type="ChEBI" id="CHEBI:84167"/>
        <dbReference type="EC" id="2.1.1.201"/>
    </reaction>
</comment>
<comment type="pathway">
    <text evidence="1">Quinol/quinone metabolism; menaquinone biosynthesis; menaquinol from 1,4-dihydroxy-2-naphthoate: step 2/2.</text>
</comment>
<comment type="pathway">
    <text evidence="1">Cofactor biosynthesis; ubiquinone biosynthesis.</text>
</comment>
<comment type="similarity">
    <text evidence="1">Belongs to the class I-like SAM-binding methyltransferase superfamily. MenG/UbiE family.</text>
</comment>